<organism evidence="5">
    <name type="scientific">Xenopus laevis</name>
    <name type="common">African clawed frog</name>
    <dbReference type="NCBI Taxonomy" id="8355"/>
    <lineage>
        <taxon>Eukaryota</taxon>
        <taxon>Metazoa</taxon>
        <taxon>Chordata</taxon>
        <taxon>Craniata</taxon>
        <taxon>Vertebrata</taxon>
        <taxon>Euteleostomi</taxon>
        <taxon>Amphibia</taxon>
        <taxon>Batrachia</taxon>
        <taxon>Anura</taxon>
        <taxon>Pipoidea</taxon>
        <taxon>Pipidae</taxon>
        <taxon>Xenopodinae</taxon>
        <taxon>Xenopus</taxon>
        <taxon>Xenopus</taxon>
    </lineage>
</organism>
<comment type="function">
    <text evidence="2">Catalyzes the reversible conversion of alpha-D-glucosamine 6-phosphate (GlcN-6P) into beta-D-fructose 6-phosphate (Fru-6P) and ammonium ion, a regulatory reaction step in de novo uridine diphosphate-N-acetyl-alpha-D-glucosamine (UDP-GlcNAc) biosynthesis via hexosamine pathway.</text>
</comment>
<comment type="catalytic activity">
    <reaction evidence="2">
        <text>alpha-D-glucosamine 6-phosphate + H2O = beta-D-fructose 6-phosphate + NH4(+)</text>
        <dbReference type="Rhea" id="RHEA:12172"/>
        <dbReference type="ChEBI" id="CHEBI:15377"/>
        <dbReference type="ChEBI" id="CHEBI:28938"/>
        <dbReference type="ChEBI" id="CHEBI:57634"/>
        <dbReference type="ChEBI" id="CHEBI:75989"/>
        <dbReference type="EC" id="3.5.99.6"/>
    </reaction>
</comment>
<comment type="subunit">
    <text evidence="1">Homohexamer.</text>
</comment>
<comment type="subcellular location">
    <subcellularLocation>
        <location evidence="1">Cytoplasm</location>
    </subcellularLocation>
</comment>
<comment type="similarity">
    <text evidence="4">Belongs to the glucosamine/galactosamine-6-phosphate isomerase family.</text>
</comment>
<protein>
    <recommendedName>
        <fullName evidence="2">Glucosamine-6-phosphate deaminase 2</fullName>
        <shortName>GlcN6P deaminase 2</shortName>
        <ecNumber evidence="2">3.5.99.6</ecNumber>
    </recommendedName>
    <alternativeName>
        <fullName evidence="2">Glucosamine-6-phosphate isomerase 2</fullName>
    </alternativeName>
</protein>
<keyword id="KW-0119">Carbohydrate metabolism</keyword>
<keyword id="KW-0175">Coiled coil</keyword>
<keyword id="KW-0963">Cytoplasm</keyword>
<keyword id="KW-0378">Hydrolase</keyword>
<keyword id="KW-1185">Reference proteome</keyword>
<gene>
    <name evidence="2" type="primary">gnpda2</name>
</gene>
<dbReference type="EC" id="3.5.99.6" evidence="2"/>
<dbReference type="EMBL" id="BC060461">
    <property type="protein sequence ID" value="AAH60461.1"/>
    <property type="molecule type" value="mRNA"/>
</dbReference>
<dbReference type="RefSeq" id="NP_001083339.1">
    <property type="nucleotide sequence ID" value="NM_001089870.1"/>
</dbReference>
<dbReference type="SMR" id="Q6PA43"/>
<dbReference type="DNASU" id="398874"/>
<dbReference type="GeneID" id="398874"/>
<dbReference type="KEGG" id="xla:398874"/>
<dbReference type="AGR" id="Xenbase:XB-GENE-983387"/>
<dbReference type="CTD" id="398874"/>
<dbReference type="Xenbase" id="XB-GENE-983387">
    <property type="gene designation" value="gnpda2.L"/>
</dbReference>
<dbReference type="OMA" id="MEFSKHI"/>
<dbReference type="OrthoDB" id="7663298at2759"/>
<dbReference type="Proteomes" id="UP000186698">
    <property type="component" value="Chromosome 1L"/>
</dbReference>
<dbReference type="Bgee" id="398874">
    <property type="expression patterns" value="Expressed in testis and 19 other cell types or tissues"/>
</dbReference>
<dbReference type="GO" id="GO:0005737">
    <property type="term" value="C:cytoplasm"/>
    <property type="evidence" value="ECO:0000318"/>
    <property type="project" value="GO_Central"/>
</dbReference>
<dbReference type="GO" id="GO:0004342">
    <property type="term" value="F:glucosamine-6-phosphate deaminase activity"/>
    <property type="evidence" value="ECO:0000318"/>
    <property type="project" value="GO_Central"/>
</dbReference>
<dbReference type="GO" id="GO:0042802">
    <property type="term" value="F:identical protein binding"/>
    <property type="evidence" value="ECO:0000318"/>
    <property type="project" value="GO_Central"/>
</dbReference>
<dbReference type="GO" id="GO:0005975">
    <property type="term" value="P:carbohydrate metabolic process"/>
    <property type="evidence" value="ECO:0007669"/>
    <property type="project" value="InterPro"/>
</dbReference>
<dbReference type="GO" id="GO:0006043">
    <property type="term" value="P:glucosamine catabolic process"/>
    <property type="evidence" value="ECO:0000318"/>
    <property type="project" value="GO_Central"/>
</dbReference>
<dbReference type="GO" id="GO:0006046">
    <property type="term" value="P:N-acetylglucosamine catabolic process"/>
    <property type="evidence" value="ECO:0000318"/>
    <property type="project" value="GO_Central"/>
</dbReference>
<dbReference type="GO" id="GO:0019262">
    <property type="term" value="P:N-acetylneuraminate catabolic process"/>
    <property type="evidence" value="ECO:0000318"/>
    <property type="project" value="GO_Central"/>
</dbReference>
<dbReference type="CDD" id="cd01399">
    <property type="entry name" value="GlcN6P_deaminase"/>
    <property type="match status" value="1"/>
</dbReference>
<dbReference type="FunFam" id="3.40.50.1360:FF:000004">
    <property type="entry name" value="Glucosamine-6-phosphate isomerase"/>
    <property type="match status" value="1"/>
</dbReference>
<dbReference type="Gene3D" id="3.40.50.1360">
    <property type="match status" value="1"/>
</dbReference>
<dbReference type="HAMAP" id="MF_01241">
    <property type="entry name" value="GlcN6P_deamin"/>
    <property type="match status" value="1"/>
</dbReference>
<dbReference type="InterPro" id="IPR006148">
    <property type="entry name" value="Glc/Gal-6P_isomerase"/>
</dbReference>
<dbReference type="InterPro" id="IPR004547">
    <property type="entry name" value="Glucosamine6P_isomerase"/>
</dbReference>
<dbReference type="InterPro" id="IPR018321">
    <property type="entry name" value="Glucosamine6P_isomerase_CS"/>
</dbReference>
<dbReference type="InterPro" id="IPR037171">
    <property type="entry name" value="NagB/RpiA_transferase-like"/>
</dbReference>
<dbReference type="NCBIfam" id="TIGR00502">
    <property type="entry name" value="nagB"/>
    <property type="match status" value="1"/>
</dbReference>
<dbReference type="PANTHER" id="PTHR11280">
    <property type="entry name" value="GLUCOSAMINE-6-PHOSPHATE ISOMERASE"/>
    <property type="match status" value="1"/>
</dbReference>
<dbReference type="PANTHER" id="PTHR11280:SF9">
    <property type="entry name" value="GLUCOSAMINE-6-PHOSPHATE ISOMERASE 2"/>
    <property type="match status" value="1"/>
</dbReference>
<dbReference type="Pfam" id="PF01182">
    <property type="entry name" value="Glucosamine_iso"/>
    <property type="match status" value="1"/>
</dbReference>
<dbReference type="SUPFAM" id="SSF100950">
    <property type="entry name" value="NagB/RpiA/CoA transferase-like"/>
    <property type="match status" value="1"/>
</dbReference>
<dbReference type="PROSITE" id="PS01161">
    <property type="entry name" value="GLC_GALNAC_ISOMERASE"/>
    <property type="match status" value="1"/>
</dbReference>
<reference key="1">
    <citation type="submission" date="2003-10" db="EMBL/GenBank/DDBJ databases">
        <authorList>
            <consortium name="NIH - Xenopus Gene Collection (XGC) project"/>
        </authorList>
    </citation>
    <scope>NUCLEOTIDE SEQUENCE [LARGE SCALE MRNA]</scope>
    <source>
        <tissue>Kidney</tissue>
    </source>
</reference>
<feature type="chain" id="PRO_0000343207" description="Glucosamine-6-phosphate deaminase 2">
    <location>
        <begin position="1"/>
        <end position="275"/>
    </location>
</feature>
<feature type="coiled-coil region" evidence="3">
    <location>
        <begin position="102"/>
        <end position="131"/>
    </location>
</feature>
<feature type="active site" description="Proton acceptor; for enolization step" evidence="1">
    <location>
        <position position="72"/>
    </location>
</feature>
<feature type="active site" description="For ring-opening step" evidence="1">
    <location>
        <position position="141"/>
    </location>
</feature>
<feature type="active site" description="Proton acceptor; for ring-opening step" evidence="1">
    <location>
        <position position="143"/>
    </location>
</feature>
<feature type="active site" description="For ring-opening step" evidence="1">
    <location>
        <position position="148"/>
    </location>
</feature>
<sequence length="275" mass="30920">MRLVILDDYALASEWAAKYICNCIIQFNPGPDKYFTLGLPTGSTPLGCYKKLIEYHKSGDLSFKYVKTFNMDEYVGLPRDHPESYHSYMWNNFFKHIDIDPNNAHILDGNASDLQAECEDFERKIKEAGGIELFVGGIGPDGHIAFNEPGSSLVSRTRLKTLAMDTILANAKYFDGDLSKVPTMALTVGVGTVMDAKEVMILITGAHKAFALYKAIEEGVNHMWTVSAFQQHPRTIFVCDEDATLELRVKTVKYFKGLMHVHNRLVDPLLSMKKN</sequence>
<name>GNPI2_XENLA</name>
<evidence type="ECO:0000250" key="1"/>
<evidence type="ECO:0000250" key="2">
    <source>
        <dbReference type="UniProtKB" id="Q8TDQ7"/>
    </source>
</evidence>
<evidence type="ECO:0000255" key="3"/>
<evidence type="ECO:0000305" key="4"/>
<evidence type="ECO:0000312" key="5">
    <source>
        <dbReference type="Proteomes" id="UP000186698"/>
    </source>
</evidence>
<accession>Q6PA43</accession>
<proteinExistence type="evidence at transcript level"/>